<keyword id="KW-0002">3D-structure</keyword>
<keyword id="KW-0255">Endonuclease</keyword>
<keyword id="KW-0378">Hydrolase</keyword>
<keyword id="KW-0540">Nuclease</keyword>
<keyword id="KW-1185">Reference proteome</keyword>
<keyword id="KW-0694">RNA-binding</keyword>
<keyword id="KW-0819">tRNA processing</keyword>
<name>RNPA_THEMA</name>
<accession>Q9X1H4</accession>
<organism>
    <name type="scientific">Thermotoga maritima (strain ATCC 43589 / DSM 3109 / JCM 10099 / NBRC 100826 / MSB8)</name>
    <dbReference type="NCBI Taxonomy" id="243274"/>
    <lineage>
        <taxon>Bacteria</taxon>
        <taxon>Thermotogati</taxon>
        <taxon>Thermotogota</taxon>
        <taxon>Thermotogae</taxon>
        <taxon>Thermotogales</taxon>
        <taxon>Thermotogaceae</taxon>
        <taxon>Thermotoga</taxon>
    </lineage>
</organism>
<proteinExistence type="evidence at protein level"/>
<sequence>MTESFTRRERLRLRRDFLLIFKEGKSLQNEYFVVLFRKNGLDYSRLGIVVKRKFGKATRRNKLKRWVREIFRRNKGVIPKGFDIVVIPRKKLSEEFERVDFWTVREKLLNLLKRIEG</sequence>
<feature type="chain" id="PRO_0000198555" description="Ribonuclease P protein component">
    <location>
        <begin position="1"/>
        <end position="117"/>
    </location>
</feature>
<feature type="helix" evidence="2">
    <location>
        <begin position="13"/>
        <end position="23"/>
    </location>
</feature>
<feature type="strand" evidence="2">
    <location>
        <begin position="24"/>
        <end position="28"/>
    </location>
</feature>
<feature type="strand" evidence="2">
    <location>
        <begin position="30"/>
        <end position="38"/>
    </location>
</feature>
<feature type="strand" evidence="2">
    <location>
        <begin position="40"/>
        <end position="43"/>
    </location>
</feature>
<feature type="strand" evidence="2">
    <location>
        <begin position="45"/>
        <end position="48"/>
    </location>
</feature>
<feature type="helix" evidence="2">
    <location>
        <begin position="52"/>
        <end position="54"/>
    </location>
</feature>
<feature type="helix" evidence="2">
    <location>
        <begin position="57"/>
        <end position="74"/>
    </location>
</feature>
<feature type="turn" evidence="2">
    <location>
        <begin position="75"/>
        <end position="77"/>
    </location>
</feature>
<feature type="strand" evidence="2">
    <location>
        <begin position="80"/>
        <end position="88"/>
    </location>
</feature>
<feature type="helix" evidence="2">
    <location>
        <begin position="90"/>
        <end position="95"/>
    </location>
</feature>
<feature type="helix" evidence="2">
    <location>
        <begin position="96"/>
        <end position="98"/>
    </location>
</feature>
<feature type="helix" evidence="2">
    <location>
        <begin position="101"/>
        <end position="112"/>
    </location>
</feature>
<evidence type="ECO:0000255" key="1">
    <source>
        <dbReference type="HAMAP-Rule" id="MF_00227"/>
    </source>
</evidence>
<evidence type="ECO:0007829" key="2">
    <source>
        <dbReference type="PDB" id="1NZ0"/>
    </source>
</evidence>
<gene>
    <name evidence="1" type="primary">rnpA</name>
    <name type="ordered locus">TM_1463</name>
</gene>
<comment type="function">
    <text evidence="1">RNaseP catalyzes the removal of the 5'-leader sequence from pre-tRNA to produce the mature 5'-terminus. It can also cleave other RNA substrates such as 4.5S RNA. The protein component plays an auxiliary but essential role in vivo by binding to the 5'-leader sequence and broadening the substrate specificity of the ribozyme.</text>
</comment>
<comment type="catalytic activity">
    <reaction evidence="1">
        <text>Endonucleolytic cleavage of RNA, removing 5'-extranucleotides from tRNA precursor.</text>
        <dbReference type="EC" id="3.1.26.5"/>
    </reaction>
</comment>
<comment type="subunit">
    <text evidence="1">Consists of a catalytic RNA component (M1 or rnpB) and a protein subunit.</text>
</comment>
<comment type="similarity">
    <text evidence="1">Belongs to the RnpA family.</text>
</comment>
<protein>
    <recommendedName>
        <fullName evidence="1">Ribonuclease P protein component</fullName>
        <shortName evidence="1">RNase P protein</shortName>
        <shortName evidence="1">RNaseP protein</shortName>
        <ecNumber evidence="1">3.1.26.5</ecNumber>
    </recommendedName>
    <alternativeName>
        <fullName evidence="1">Protein C5</fullName>
    </alternativeName>
</protein>
<dbReference type="EC" id="3.1.26.5" evidence="1"/>
<dbReference type="EMBL" id="AE000512">
    <property type="protein sequence ID" value="AAD36531.1"/>
    <property type="molecule type" value="Genomic_DNA"/>
</dbReference>
<dbReference type="PIR" id="H72251">
    <property type="entry name" value="H72251"/>
</dbReference>
<dbReference type="RefSeq" id="NP_229262.1">
    <property type="nucleotide sequence ID" value="NC_000853.1"/>
</dbReference>
<dbReference type="RefSeq" id="WP_004081756.1">
    <property type="nucleotide sequence ID" value="NC_000853.1"/>
</dbReference>
<dbReference type="PDB" id="1NZ0">
    <property type="method" value="X-ray"/>
    <property type="resolution" value="1.20 A"/>
    <property type="chains" value="A/B/C/D=1-117"/>
</dbReference>
<dbReference type="PDB" id="3Q1Q">
    <property type="method" value="X-ray"/>
    <property type="resolution" value="3.80 A"/>
    <property type="chains" value="A=3-117"/>
</dbReference>
<dbReference type="PDB" id="3Q1R">
    <property type="method" value="X-ray"/>
    <property type="resolution" value="4.21 A"/>
    <property type="chains" value="A=3-117"/>
</dbReference>
<dbReference type="PDB" id="6CQC">
    <property type="method" value="X-ray"/>
    <property type="resolution" value="1.54 A"/>
    <property type="chains" value="A/B/C/D=2-117"/>
</dbReference>
<dbReference type="PDB" id="6MAX">
    <property type="method" value="X-ray"/>
    <property type="resolution" value="1.42 A"/>
    <property type="chains" value="A=9-117"/>
</dbReference>
<dbReference type="PDBsum" id="1NZ0"/>
<dbReference type="PDBsum" id="3Q1Q"/>
<dbReference type="PDBsum" id="3Q1R"/>
<dbReference type="PDBsum" id="6CQC"/>
<dbReference type="PDBsum" id="6MAX"/>
<dbReference type="BMRB" id="Q9X1H4"/>
<dbReference type="SMR" id="Q9X1H4"/>
<dbReference type="FunCoup" id="Q9X1H4">
    <property type="interactions" value="202"/>
</dbReference>
<dbReference type="STRING" id="243274.TM_1463"/>
<dbReference type="PaxDb" id="243274-THEMA_07000"/>
<dbReference type="EnsemblBacteria" id="AAD36531">
    <property type="protein sequence ID" value="AAD36531"/>
    <property type="gene ID" value="TM_1463"/>
</dbReference>
<dbReference type="KEGG" id="tma:TM1463"/>
<dbReference type="KEGG" id="tmi:THEMA_07000"/>
<dbReference type="KEGG" id="tmm:Tmari_1469"/>
<dbReference type="KEGG" id="tmw:THMA_1493"/>
<dbReference type="eggNOG" id="COG0594">
    <property type="taxonomic scope" value="Bacteria"/>
</dbReference>
<dbReference type="InParanoid" id="Q9X1H4"/>
<dbReference type="OrthoDB" id="9810867at2"/>
<dbReference type="BRENDA" id="3.1.26.5">
    <property type="organism ID" value="6331"/>
</dbReference>
<dbReference type="EvolutionaryTrace" id="Q9X1H4"/>
<dbReference type="Proteomes" id="UP000008183">
    <property type="component" value="Chromosome"/>
</dbReference>
<dbReference type="GO" id="GO:0030677">
    <property type="term" value="C:ribonuclease P complex"/>
    <property type="evidence" value="ECO:0000318"/>
    <property type="project" value="GO_Central"/>
</dbReference>
<dbReference type="GO" id="GO:0042781">
    <property type="term" value="F:3'-tRNA processing endoribonuclease activity"/>
    <property type="evidence" value="ECO:0000318"/>
    <property type="project" value="GO_Central"/>
</dbReference>
<dbReference type="GO" id="GO:0004526">
    <property type="term" value="F:ribonuclease P activity"/>
    <property type="evidence" value="ECO:0000318"/>
    <property type="project" value="GO_Central"/>
</dbReference>
<dbReference type="GO" id="GO:0000049">
    <property type="term" value="F:tRNA binding"/>
    <property type="evidence" value="ECO:0007669"/>
    <property type="project" value="UniProtKB-UniRule"/>
</dbReference>
<dbReference type="GO" id="GO:0042780">
    <property type="term" value="P:tRNA 3'-end processing"/>
    <property type="evidence" value="ECO:0000318"/>
    <property type="project" value="GO_Central"/>
</dbReference>
<dbReference type="GO" id="GO:0001682">
    <property type="term" value="P:tRNA 5'-leader removal"/>
    <property type="evidence" value="ECO:0007669"/>
    <property type="project" value="UniProtKB-UniRule"/>
</dbReference>
<dbReference type="FunFam" id="3.30.230.10:FF:000155">
    <property type="entry name" value="Ribonuclease P protein component"/>
    <property type="match status" value="1"/>
</dbReference>
<dbReference type="Gene3D" id="3.30.230.10">
    <property type="match status" value="1"/>
</dbReference>
<dbReference type="HAMAP" id="MF_00227">
    <property type="entry name" value="RNase_P"/>
    <property type="match status" value="1"/>
</dbReference>
<dbReference type="InterPro" id="IPR020568">
    <property type="entry name" value="Ribosomal_Su5_D2-typ_SF"/>
</dbReference>
<dbReference type="InterPro" id="IPR014721">
    <property type="entry name" value="Ribsml_uS5_D2-typ_fold_subgr"/>
</dbReference>
<dbReference type="InterPro" id="IPR000100">
    <property type="entry name" value="RNase_P"/>
</dbReference>
<dbReference type="InterPro" id="IPR020539">
    <property type="entry name" value="RNase_P_CS"/>
</dbReference>
<dbReference type="NCBIfam" id="TIGR00188">
    <property type="entry name" value="rnpA"/>
    <property type="match status" value="1"/>
</dbReference>
<dbReference type="PANTHER" id="PTHR33992">
    <property type="entry name" value="RIBONUCLEASE P PROTEIN COMPONENT"/>
    <property type="match status" value="1"/>
</dbReference>
<dbReference type="PANTHER" id="PTHR33992:SF1">
    <property type="entry name" value="RIBONUCLEASE P PROTEIN COMPONENT"/>
    <property type="match status" value="1"/>
</dbReference>
<dbReference type="Pfam" id="PF00825">
    <property type="entry name" value="Ribonuclease_P"/>
    <property type="match status" value="1"/>
</dbReference>
<dbReference type="SUPFAM" id="SSF54211">
    <property type="entry name" value="Ribosomal protein S5 domain 2-like"/>
    <property type="match status" value="1"/>
</dbReference>
<dbReference type="PROSITE" id="PS00648">
    <property type="entry name" value="RIBONUCLEASE_P"/>
    <property type="match status" value="1"/>
</dbReference>
<reference key="1">
    <citation type="journal article" date="1999" name="Nature">
        <title>Evidence for lateral gene transfer between Archaea and Bacteria from genome sequence of Thermotoga maritima.</title>
        <authorList>
            <person name="Nelson K.E."/>
            <person name="Clayton R.A."/>
            <person name="Gill S.R."/>
            <person name="Gwinn M.L."/>
            <person name="Dodson R.J."/>
            <person name="Haft D.H."/>
            <person name="Hickey E.K."/>
            <person name="Peterson J.D."/>
            <person name="Nelson W.C."/>
            <person name="Ketchum K.A."/>
            <person name="McDonald L.A."/>
            <person name="Utterback T.R."/>
            <person name="Malek J.A."/>
            <person name="Linher K.D."/>
            <person name="Garrett M.M."/>
            <person name="Stewart A.M."/>
            <person name="Cotton M.D."/>
            <person name="Pratt M.S."/>
            <person name="Phillips C.A."/>
            <person name="Richardson D.L."/>
            <person name="Heidelberg J.F."/>
            <person name="Sutton G.G."/>
            <person name="Fleischmann R.D."/>
            <person name="Eisen J.A."/>
            <person name="White O."/>
            <person name="Salzberg S.L."/>
            <person name="Smith H.O."/>
            <person name="Venter J.C."/>
            <person name="Fraser C.M."/>
        </authorList>
    </citation>
    <scope>NUCLEOTIDE SEQUENCE [LARGE SCALE GENOMIC DNA]</scope>
    <source>
        <strain>ATCC 43589 / DSM 3109 / JCM 10099 / NBRC 100826 / MSB8</strain>
    </source>
</reference>
<reference key="2">
    <citation type="journal article" date="2003" name="Proc. Natl. Acad. Sci. U.S.A.">
        <title>High-resolution structure of RNase P protein from Thermotoga maritima.</title>
        <authorList>
            <person name="Kazantsev A.V."/>
            <person name="Krivenko A.A."/>
            <person name="Harrington D.J."/>
            <person name="Carter R.J."/>
            <person name="Holbrook S.R."/>
            <person name="Adams P.D."/>
            <person name="Pace N.R."/>
        </authorList>
    </citation>
    <scope>X-RAY CRYSTALLOGRAPHY (1.2 ANGSTROMS)</scope>
</reference>